<evidence type="ECO:0000305" key="1"/>
<reference key="1">
    <citation type="journal article" date="1997" name="Science">
        <title>The complete genome sequence of Escherichia coli K-12.</title>
        <authorList>
            <person name="Blattner F.R."/>
            <person name="Plunkett G. III"/>
            <person name="Bloch C.A."/>
            <person name="Perna N.T."/>
            <person name="Burland V."/>
            <person name="Riley M."/>
            <person name="Collado-Vides J."/>
            <person name="Glasner J.D."/>
            <person name="Rode C.K."/>
            <person name="Mayhew G.F."/>
            <person name="Gregor J."/>
            <person name="Davis N.W."/>
            <person name="Kirkpatrick H.A."/>
            <person name="Goeden M.A."/>
            <person name="Rose D.J."/>
            <person name="Mau B."/>
            <person name="Shao Y."/>
        </authorList>
    </citation>
    <scope>NUCLEOTIDE SEQUENCE [LARGE SCALE GENOMIC DNA]</scope>
    <source>
        <strain>K12 / MG1655 / ATCC 47076</strain>
    </source>
</reference>
<gene>
    <name type="primary">ypaA</name>
    <name type="ordered locus">b4543</name>
</gene>
<name>YPAA_ECOLI</name>
<feature type="chain" id="PRO_0000429437" description="Uncharacterized protein YpaA">
    <location>
        <begin position="1"/>
        <end position="61"/>
    </location>
</feature>
<proteinExistence type="uncertain"/>
<comment type="caution">
    <text evidence="1">Could be the product of a pseudogene.</text>
</comment>
<organism>
    <name type="scientific">Escherichia coli (strain K12)</name>
    <dbReference type="NCBI Taxonomy" id="83333"/>
    <lineage>
        <taxon>Bacteria</taxon>
        <taxon>Pseudomonadati</taxon>
        <taxon>Pseudomonadota</taxon>
        <taxon>Gammaproteobacteria</taxon>
        <taxon>Enterobacterales</taxon>
        <taxon>Enterobacteriaceae</taxon>
        <taxon>Escherichia</taxon>
    </lineage>
</organism>
<dbReference type="EMBL" id="U00096">
    <property type="status" value="NOT_ANNOTATED_CDS"/>
    <property type="molecule type" value="Genomic_DNA"/>
</dbReference>
<dbReference type="RefSeq" id="WP_000150333.1">
    <property type="nucleotide sequence ID" value="NZ_SSTT01000010.1"/>
</dbReference>
<dbReference type="SMR" id="V9HVX0"/>
<dbReference type="KEGG" id="ecoc:C3026_12540"/>
<dbReference type="PATRIC" id="fig|83333.103.peg.3124"/>
<dbReference type="InParanoid" id="V9HVX0"/>
<dbReference type="OMA" id="QESMHEQ"/>
<dbReference type="OrthoDB" id="6548907at2"/>
<dbReference type="Proteomes" id="UP000000625">
    <property type="component" value="Chromosome"/>
</dbReference>
<dbReference type="InterPro" id="IPR051699">
    <property type="entry name" value="Rpn/YhgA-like_nuclease"/>
</dbReference>
<dbReference type="PANTHER" id="PTHR34611">
    <property type="match status" value="1"/>
</dbReference>
<dbReference type="PANTHER" id="PTHR34611:SF2">
    <property type="entry name" value="INACTIVE RECOMBINATION-PROMOTING NUCLEASE-LIKE PROTEIN RPNE-RELATED"/>
    <property type="match status" value="1"/>
</dbReference>
<sequence>MTIAERLRQEGHQIGWQEGKLEGLHEQAIKIALRMLEQGFDRDQVLAATQLSEADLAANNH</sequence>
<protein>
    <recommendedName>
        <fullName>Uncharacterized protein YpaA</fullName>
    </recommendedName>
</protein>
<keyword id="KW-1185">Reference proteome</keyword>
<accession>V9HVX0</accession>